<protein>
    <recommendedName>
        <fullName evidence="1">Ribosome-binding factor A</fullName>
    </recommendedName>
</protein>
<feature type="chain" id="PRO_0000321256" description="Ribosome-binding factor A">
    <location>
        <begin position="1"/>
        <end position="116"/>
    </location>
</feature>
<comment type="function">
    <text evidence="1">One of several proteins that assist in the late maturation steps of the functional core of the 30S ribosomal subunit. Associates with free 30S ribosomal subunits (but not with 30S subunits that are part of 70S ribosomes or polysomes). Required for efficient processing of 16S rRNA. May interact with the 5'-terminal helix region of 16S rRNA.</text>
</comment>
<comment type="subunit">
    <text evidence="1">Monomer. Binds 30S ribosomal subunits, but not 50S ribosomal subunits or 70S ribosomes.</text>
</comment>
<comment type="subcellular location">
    <subcellularLocation>
        <location evidence="1">Cytoplasm</location>
    </subcellularLocation>
</comment>
<comment type="similarity">
    <text evidence="1">Belongs to the RbfA family.</text>
</comment>
<comment type="sequence caution" evidence="2">
    <conflict type="erroneous initiation">
        <sequence resource="EMBL-CDS" id="ABF36486"/>
    </conflict>
    <text>Extended N-terminus.</text>
</comment>
<keyword id="KW-0963">Cytoplasm</keyword>
<keyword id="KW-0690">Ribosome biogenesis</keyword>
<proteinExistence type="inferred from homology"/>
<name>RBFA_STRPB</name>
<sequence length="116" mass="13226">MANHRIDRVGMEIKREVNDILQKKVRDPRVQGVTITEVQMQGDLSLAKVYYTIMSDLASDNQKAQTGLEKATGTIKRELGKQLTMYKIPDLVFEKDNSIAYGNKIDQLLRELDNKS</sequence>
<gene>
    <name evidence="1" type="primary">rbfA</name>
    <name type="ordered locus">MGAS2096_Spy1434</name>
</gene>
<evidence type="ECO:0000255" key="1">
    <source>
        <dbReference type="HAMAP-Rule" id="MF_00003"/>
    </source>
</evidence>
<evidence type="ECO:0000305" key="2"/>
<dbReference type="EMBL" id="CP000261">
    <property type="protein sequence ID" value="ABF36486.1"/>
    <property type="status" value="ALT_INIT"/>
    <property type="molecule type" value="Genomic_DNA"/>
</dbReference>
<dbReference type="SMR" id="Q1JAC2"/>
<dbReference type="KEGG" id="spj:MGAS2096_Spy1434"/>
<dbReference type="HOGENOM" id="CLU_089475_3_0_9"/>
<dbReference type="GO" id="GO:0005829">
    <property type="term" value="C:cytosol"/>
    <property type="evidence" value="ECO:0007669"/>
    <property type="project" value="TreeGrafter"/>
</dbReference>
<dbReference type="GO" id="GO:0043024">
    <property type="term" value="F:ribosomal small subunit binding"/>
    <property type="evidence" value="ECO:0007669"/>
    <property type="project" value="TreeGrafter"/>
</dbReference>
<dbReference type="GO" id="GO:0030490">
    <property type="term" value="P:maturation of SSU-rRNA"/>
    <property type="evidence" value="ECO:0007669"/>
    <property type="project" value="UniProtKB-UniRule"/>
</dbReference>
<dbReference type="Gene3D" id="3.30.300.20">
    <property type="match status" value="1"/>
</dbReference>
<dbReference type="HAMAP" id="MF_00003">
    <property type="entry name" value="RbfA"/>
    <property type="match status" value="1"/>
</dbReference>
<dbReference type="InterPro" id="IPR015946">
    <property type="entry name" value="KH_dom-like_a/b"/>
</dbReference>
<dbReference type="InterPro" id="IPR000238">
    <property type="entry name" value="RbfA"/>
</dbReference>
<dbReference type="InterPro" id="IPR023799">
    <property type="entry name" value="RbfA_dom_sf"/>
</dbReference>
<dbReference type="InterPro" id="IPR020053">
    <property type="entry name" value="Ribosome-bd_factorA_CS"/>
</dbReference>
<dbReference type="NCBIfam" id="TIGR00082">
    <property type="entry name" value="rbfA"/>
    <property type="match status" value="1"/>
</dbReference>
<dbReference type="PANTHER" id="PTHR33515">
    <property type="entry name" value="RIBOSOME-BINDING FACTOR A, CHLOROPLASTIC-RELATED"/>
    <property type="match status" value="1"/>
</dbReference>
<dbReference type="PANTHER" id="PTHR33515:SF1">
    <property type="entry name" value="RIBOSOME-BINDING FACTOR A, CHLOROPLASTIC-RELATED"/>
    <property type="match status" value="1"/>
</dbReference>
<dbReference type="Pfam" id="PF02033">
    <property type="entry name" value="RBFA"/>
    <property type="match status" value="1"/>
</dbReference>
<dbReference type="SUPFAM" id="SSF89919">
    <property type="entry name" value="Ribosome-binding factor A, RbfA"/>
    <property type="match status" value="1"/>
</dbReference>
<dbReference type="PROSITE" id="PS01319">
    <property type="entry name" value="RBFA"/>
    <property type="match status" value="1"/>
</dbReference>
<organism>
    <name type="scientific">Streptococcus pyogenes serotype M12 (strain MGAS2096)</name>
    <dbReference type="NCBI Taxonomy" id="370553"/>
    <lineage>
        <taxon>Bacteria</taxon>
        <taxon>Bacillati</taxon>
        <taxon>Bacillota</taxon>
        <taxon>Bacilli</taxon>
        <taxon>Lactobacillales</taxon>
        <taxon>Streptococcaceae</taxon>
        <taxon>Streptococcus</taxon>
    </lineage>
</organism>
<reference key="1">
    <citation type="journal article" date="2006" name="Proc. Natl. Acad. Sci. U.S.A.">
        <title>Molecular genetic anatomy of inter- and intraserotype variation in the human bacterial pathogen group A Streptococcus.</title>
        <authorList>
            <person name="Beres S.B."/>
            <person name="Richter E.W."/>
            <person name="Nagiec M.J."/>
            <person name="Sumby P."/>
            <person name="Porcella S.F."/>
            <person name="DeLeo F.R."/>
            <person name="Musser J.M."/>
        </authorList>
    </citation>
    <scope>NUCLEOTIDE SEQUENCE [LARGE SCALE GENOMIC DNA]</scope>
    <source>
        <strain>MGAS2096</strain>
    </source>
</reference>
<accession>Q1JAC2</accession>